<feature type="chain" id="PRO_0000136303" description="Histidine--tRNA ligase">
    <location>
        <begin position="1"/>
        <end position="466"/>
    </location>
</feature>
<reference key="1">
    <citation type="journal article" date="2000" name="Nature">
        <title>The genome sequence of the plant pathogen Xylella fastidiosa.</title>
        <authorList>
            <person name="Simpson A.J.G."/>
            <person name="Reinach F.C."/>
            <person name="Arruda P."/>
            <person name="Abreu F.A."/>
            <person name="Acencio M."/>
            <person name="Alvarenga R."/>
            <person name="Alves L.M.C."/>
            <person name="Araya J.E."/>
            <person name="Baia G.S."/>
            <person name="Baptista C.S."/>
            <person name="Barros M.H."/>
            <person name="Bonaccorsi E.D."/>
            <person name="Bordin S."/>
            <person name="Bove J.M."/>
            <person name="Briones M.R.S."/>
            <person name="Bueno M.R.P."/>
            <person name="Camargo A.A."/>
            <person name="Camargo L.E.A."/>
            <person name="Carraro D.M."/>
            <person name="Carrer H."/>
            <person name="Colauto N.B."/>
            <person name="Colombo C."/>
            <person name="Costa F.F."/>
            <person name="Costa M.C.R."/>
            <person name="Costa-Neto C.M."/>
            <person name="Coutinho L.L."/>
            <person name="Cristofani M."/>
            <person name="Dias-Neto E."/>
            <person name="Docena C."/>
            <person name="El-Dorry H."/>
            <person name="Facincani A.P."/>
            <person name="Ferreira A.J.S."/>
            <person name="Ferreira V.C.A."/>
            <person name="Ferro J.A."/>
            <person name="Fraga J.S."/>
            <person name="Franca S.C."/>
            <person name="Franco M.C."/>
            <person name="Frohme M."/>
            <person name="Furlan L.R."/>
            <person name="Garnier M."/>
            <person name="Goldman G.H."/>
            <person name="Goldman M.H.S."/>
            <person name="Gomes S.L."/>
            <person name="Gruber A."/>
            <person name="Ho P.L."/>
            <person name="Hoheisel J.D."/>
            <person name="Junqueira M.L."/>
            <person name="Kemper E.L."/>
            <person name="Kitajima J.P."/>
            <person name="Krieger J.E."/>
            <person name="Kuramae E.E."/>
            <person name="Laigret F."/>
            <person name="Lambais M.R."/>
            <person name="Leite L.C.C."/>
            <person name="Lemos E.G.M."/>
            <person name="Lemos M.V.F."/>
            <person name="Lopes S.A."/>
            <person name="Lopes C.R."/>
            <person name="Machado J.A."/>
            <person name="Machado M.A."/>
            <person name="Madeira A.M.B.N."/>
            <person name="Madeira H.M.F."/>
            <person name="Marino C.L."/>
            <person name="Marques M.V."/>
            <person name="Martins E.A.L."/>
            <person name="Martins E.M.F."/>
            <person name="Matsukuma A.Y."/>
            <person name="Menck C.F.M."/>
            <person name="Miracca E.C."/>
            <person name="Miyaki C.Y."/>
            <person name="Monteiro-Vitorello C.B."/>
            <person name="Moon D.H."/>
            <person name="Nagai M.A."/>
            <person name="Nascimento A.L.T.O."/>
            <person name="Netto L.E.S."/>
            <person name="Nhani A. Jr."/>
            <person name="Nobrega F.G."/>
            <person name="Nunes L.R."/>
            <person name="Oliveira M.A."/>
            <person name="de Oliveira M.C."/>
            <person name="de Oliveira R.C."/>
            <person name="Palmieri D.A."/>
            <person name="Paris A."/>
            <person name="Peixoto B.R."/>
            <person name="Pereira G.A.G."/>
            <person name="Pereira H.A. Jr."/>
            <person name="Pesquero J.B."/>
            <person name="Quaggio R.B."/>
            <person name="Roberto P.G."/>
            <person name="Rodrigues V."/>
            <person name="de Rosa A.J.M."/>
            <person name="de Rosa V.E. Jr."/>
            <person name="de Sa R.G."/>
            <person name="Santelli R.V."/>
            <person name="Sawasaki H.E."/>
            <person name="da Silva A.C.R."/>
            <person name="da Silva A.M."/>
            <person name="da Silva F.R."/>
            <person name="Silva W.A. Jr."/>
            <person name="da Silveira J.F."/>
            <person name="Silvestri M.L.Z."/>
            <person name="Siqueira W.J."/>
            <person name="de Souza A.A."/>
            <person name="de Souza A.P."/>
            <person name="Terenzi M.F."/>
            <person name="Truffi D."/>
            <person name="Tsai S.M."/>
            <person name="Tsuhako M.H."/>
            <person name="Vallada H."/>
            <person name="Van Sluys M.A."/>
            <person name="Verjovski-Almeida S."/>
            <person name="Vettore A.L."/>
            <person name="Zago M.A."/>
            <person name="Zatz M."/>
            <person name="Meidanis J."/>
            <person name="Setubal J.C."/>
        </authorList>
    </citation>
    <scope>NUCLEOTIDE SEQUENCE [LARGE SCALE GENOMIC DNA]</scope>
    <source>
        <strain>9a5c</strain>
    </source>
</reference>
<evidence type="ECO:0000250" key="1"/>
<evidence type="ECO:0000305" key="2"/>
<dbReference type="EC" id="6.1.1.21"/>
<dbReference type="EMBL" id="AE003849">
    <property type="protein sequence ID" value="AAF85021.1"/>
    <property type="molecule type" value="Genomic_DNA"/>
</dbReference>
<dbReference type="PIR" id="A82586">
    <property type="entry name" value="A82586"/>
</dbReference>
<dbReference type="RefSeq" id="WP_010894670.1">
    <property type="nucleotide sequence ID" value="NC_002488.3"/>
</dbReference>
<dbReference type="SMR" id="Q9PBC2"/>
<dbReference type="STRING" id="160492.XF_2222"/>
<dbReference type="KEGG" id="xfa:XF_2222"/>
<dbReference type="PATRIC" id="fig|160492.11.peg.2365"/>
<dbReference type="eggNOG" id="COG0124">
    <property type="taxonomic scope" value="Bacteria"/>
</dbReference>
<dbReference type="HOGENOM" id="CLU_025113_3_0_6"/>
<dbReference type="Proteomes" id="UP000000812">
    <property type="component" value="Chromosome"/>
</dbReference>
<dbReference type="GO" id="GO:0005737">
    <property type="term" value="C:cytoplasm"/>
    <property type="evidence" value="ECO:0007669"/>
    <property type="project" value="UniProtKB-SubCell"/>
</dbReference>
<dbReference type="GO" id="GO:0005524">
    <property type="term" value="F:ATP binding"/>
    <property type="evidence" value="ECO:0007669"/>
    <property type="project" value="UniProtKB-UniRule"/>
</dbReference>
<dbReference type="GO" id="GO:0004821">
    <property type="term" value="F:histidine-tRNA ligase activity"/>
    <property type="evidence" value="ECO:0007669"/>
    <property type="project" value="UniProtKB-UniRule"/>
</dbReference>
<dbReference type="GO" id="GO:0006427">
    <property type="term" value="P:histidyl-tRNA aminoacylation"/>
    <property type="evidence" value="ECO:0007669"/>
    <property type="project" value="UniProtKB-UniRule"/>
</dbReference>
<dbReference type="CDD" id="cd00773">
    <property type="entry name" value="HisRS-like_core"/>
    <property type="match status" value="1"/>
</dbReference>
<dbReference type="CDD" id="cd00859">
    <property type="entry name" value="HisRS_anticodon"/>
    <property type="match status" value="1"/>
</dbReference>
<dbReference type="FunFam" id="3.40.50.800:FF:000027">
    <property type="entry name" value="Histidine--tRNA ligase"/>
    <property type="match status" value="1"/>
</dbReference>
<dbReference type="Gene3D" id="3.40.50.800">
    <property type="entry name" value="Anticodon-binding domain"/>
    <property type="match status" value="1"/>
</dbReference>
<dbReference type="Gene3D" id="3.30.930.10">
    <property type="entry name" value="Bira Bifunctional Protein, Domain 2"/>
    <property type="match status" value="1"/>
</dbReference>
<dbReference type="HAMAP" id="MF_00127">
    <property type="entry name" value="His_tRNA_synth"/>
    <property type="match status" value="1"/>
</dbReference>
<dbReference type="InterPro" id="IPR006195">
    <property type="entry name" value="aa-tRNA-synth_II"/>
</dbReference>
<dbReference type="InterPro" id="IPR045864">
    <property type="entry name" value="aa-tRNA-synth_II/BPL/LPL"/>
</dbReference>
<dbReference type="InterPro" id="IPR004154">
    <property type="entry name" value="Anticodon-bd"/>
</dbReference>
<dbReference type="InterPro" id="IPR036621">
    <property type="entry name" value="Anticodon-bd_dom_sf"/>
</dbReference>
<dbReference type="InterPro" id="IPR015807">
    <property type="entry name" value="His-tRNA-ligase"/>
</dbReference>
<dbReference type="InterPro" id="IPR041715">
    <property type="entry name" value="HisRS-like_core"/>
</dbReference>
<dbReference type="InterPro" id="IPR004516">
    <property type="entry name" value="HisRS/HisZ"/>
</dbReference>
<dbReference type="InterPro" id="IPR033656">
    <property type="entry name" value="HisRS_anticodon"/>
</dbReference>
<dbReference type="NCBIfam" id="TIGR00442">
    <property type="entry name" value="hisS"/>
    <property type="match status" value="1"/>
</dbReference>
<dbReference type="PANTHER" id="PTHR11476:SF7">
    <property type="entry name" value="HISTIDINE--TRNA LIGASE"/>
    <property type="match status" value="1"/>
</dbReference>
<dbReference type="PANTHER" id="PTHR11476">
    <property type="entry name" value="HISTIDYL-TRNA SYNTHETASE"/>
    <property type="match status" value="1"/>
</dbReference>
<dbReference type="Pfam" id="PF03129">
    <property type="entry name" value="HGTP_anticodon"/>
    <property type="match status" value="1"/>
</dbReference>
<dbReference type="Pfam" id="PF13393">
    <property type="entry name" value="tRNA-synt_His"/>
    <property type="match status" value="1"/>
</dbReference>
<dbReference type="PIRSF" id="PIRSF001549">
    <property type="entry name" value="His-tRNA_synth"/>
    <property type="match status" value="1"/>
</dbReference>
<dbReference type="SUPFAM" id="SSF52954">
    <property type="entry name" value="Class II aaRS ABD-related"/>
    <property type="match status" value="1"/>
</dbReference>
<dbReference type="SUPFAM" id="SSF55681">
    <property type="entry name" value="Class II aaRS and biotin synthetases"/>
    <property type="match status" value="1"/>
</dbReference>
<dbReference type="PROSITE" id="PS50862">
    <property type="entry name" value="AA_TRNA_LIGASE_II"/>
    <property type="match status" value="1"/>
</dbReference>
<proteinExistence type="inferred from homology"/>
<name>SYH_XYLFA</name>
<sequence>MIKPRTPPGVLELLPREQIAFQRMLDVIRRNYERFGFLPVETPVFELSDVLLTKSGGETERQVYFVQSTGTLANAAESGATRLPELALRFDLTVPLARYVAEYEHVLAFPFRRYQMQRVYRGERAQRGRFREFYQCDIDVIGKQTLSIRYDAEVLAVIHAVFSELGIGDFQVQLNNRKVLRGFLESQGVRDGDLQLAVLREVDKLDKRGVLDVRDTLIGQGFGIPAAQVENILTFVATRSTSHADALVRLDALIEDSGPEAHEMLRQGVAELREVLTLVNVLGVPEHAYRLNFSIARGLDYYTGTVYETSLINHPQIGSICSGGRYENLANHYTQSKLPGVGISIGLTRLFWQLRDAGVMDGIAESSVQAMVVLMDEATLDDALDIARCLRIGGINTEVQMEAKKVSKQFQYASRAGIRFVVLAGDDERARGVVAVKDLTREQQFEIPREELASTLQVELEQAKVM</sequence>
<comment type="catalytic activity">
    <reaction>
        <text>tRNA(His) + L-histidine + ATP = L-histidyl-tRNA(His) + AMP + diphosphate + H(+)</text>
        <dbReference type="Rhea" id="RHEA:17313"/>
        <dbReference type="Rhea" id="RHEA-COMP:9665"/>
        <dbReference type="Rhea" id="RHEA-COMP:9689"/>
        <dbReference type="ChEBI" id="CHEBI:15378"/>
        <dbReference type="ChEBI" id="CHEBI:30616"/>
        <dbReference type="ChEBI" id="CHEBI:33019"/>
        <dbReference type="ChEBI" id="CHEBI:57595"/>
        <dbReference type="ChEBI" id="CHEBI:78442"/>
        <dbReference type="ChEBI" id="CHEBI:78527"/>
        <dbReference type="ChEBI" id="CHEBI:456215"/>
        <dbReference type="EC" id="6.1.1.21"/>
    </reaction>
</comment>
<comment type="subunit">
    <text evidence="1">Homodimer.</text>
</comment>
<comment type="subcellular location">
    <subcellularLocation>
        <location evidence="1">Cytoplasm</location>
    </subcellularLocation>
</comment>
<comment type="similarity">
    <text evidence="2">Belongs to the class-II aminoacyl-tRNA synthetase family.</text>
</comment>
<organism>
    <name type="scientific">Xylella fastidiosa (strain 9a5c)</name>
    <dbReference type="NCBI Taxonomy" id="160492"/>
    <lineage>
        <taxon>Bacteria</taxon>
        <taxon>Pseudomonadati</taxon>
        <taxon>Pseudomonadota</taxon>
        <taxon>Gammaproteobacteria</taxon>
        <taxon>Lysobacterales</taxon>
        <taxon>Lysobacteraceae</taxon>
        <taxon>Xylella</taxon>
    </lineage>
</organism>
<gene>
    <name type="primary">hisS</name>
    <name type="ordered locus">XF_2222</name>
</gene>
<protein>
    <recommendedName>
        <fullName>Histidine--tRNA ligase</fullName>
        <ecNumber>6.1.1.21</ecNumber>
    </recommendedName>
    <alternativeName>
        <fullName>Histidyl-tRNA synthetase</fullName>
        <shortName>HisRS</shortName>
    </alternativeName>
</protein>
<accession>Q9PBC2</accession>
<keyword id="KW-0030">Aminoacyl-tRNA synthetase</keyword>
<keyword id="KW-0067">ATP-binding</keyword>
<keyword id="KW-0963">Cytoplasm</keyword>
<keyword id="KW-0436">Ligase</keyword>
<keyword id="KW-0547">Nucleotide-binding</keyword>
<keyword id="KW-0648">Protein biosynthesis</keyword>